<gene>
    <name evidence="1" type="primary">menD</name>
    <name type="ordered locus">JTY_0570</name>
</gene>
<organism>
    <name type="scientific">Mycobacterium bovis (strain BCG / Tokyo 172 / ATCC 35737 / TMC 1019)</name>
    <dbReference type="NCBI Taxonomy" id="561275"/>
    <lineage>
        <taxon>Bacteria</taxon>
        <taxon>Bacillati</taxon>
        <taxon>Actinomycetota</taxon>
        <taxon>Actinomycetes</taxon>
        <taxon>Mycobacteriales</taxon>
        <taxon>Mycobacteriaceae</taxon>
        <taxon>Mycobacterium</taxon>
        <taxon>Mycobacterium tuberculosis complex</taxon>
    </lineage>
</organism>
<sequence>MNPSTTQARVVVDELIRGGVRDVVLCPGSRNAPLAFALQDADRSGRIRLHVRIDERTAGYLAIGLAIGAGAPVCVAMTSGTAVANLGPAVVEANYARVPLIVLSANRPYELLGTGANQTMEQLGYFGTQVRASISLGLAEDAPERTSALNATWRSATCRVLAAATGARTANAGPVHFDIPLREPLVPDPEPLGAVTPPGRPAGKPWTYTPPVTFDQPLDIDLSVDTVVISGHGAGVHPNLAALPTVAEPTAPRSGDNPLHPLALPLLRPQQVIMLGRPTLHRPVSVLLADAEVPVFALTTGPRWPDVSGNSQATGTRAVTTGAPRPAWLDRCAAMNRHAIAAVREQLAAHPLTTGLHVAAAVSHALRPGDQLVLGASNPVRDVALAGLDTRGIRVRSNRGVAGIDGTVSTAIGAALAYEGAHERTGSPDSPPRTIALIGDLTFVHDSSGLLIGPTEPIPRSLTIVVSNDNGGGIFELLEQGDPRFSDVSSRIFGTPHDVDVGALCRAYHVESRQIEVDELGPTLDQPGAGMRVLEVKADRSSLRQLHAAIKAAL</sequence>
<protein>
    <recommendedName>
        <fullName evidence="1">2-succinyl-5-enolpyruvyl-6-hydroxy-3-cyclohexene-1-carboxylate synthase</fullName>
        <shortName evidence="1">SEPHCHC synthase</shortName>
        <ecNumber evidence="1">2.2.1.9</ecNumber>
    </recommendedName>
    <alternativeName>
        <fullName evidence="1">Menaquinone biosynthesis protein MenD</fullName>
    </alternativeName>
</protein>
<comment type="function">
    <text evidence="1">Catalyzes the thiamine diphosphate-dependent decarboxylation of 2-oxoglutarate and the subsequent addition of the resulting succinic semialdehyde-thiamine pyrophosphate anion to isochorismate to yield 2-succinyl-5-enolpyruvyl-6-hydroxy-3-cyclohexene-1-carboxylate (SEPHCHC).</text>
</comment>
<comment type="catalytic activity">
    <reaction evidence="1">
        <text>isochorismate + 2-oxoglutarate + H(+) = 5-enolpyruvoyl-6-hydroxy-2-succinyl-cyclohex-3-ene-1-carboxylate + CO2</text>
        <dbReference type="Rhea" id="RHEA:25593"/>
        <dbReference type="ChEBI" id="CHEBI:15378"/>
        <dbReference type="ChEBI" id="CHEBI:16526"/>
        <dbReference type="ChEBI" id="CHEBI:16810"/>
        <dbReference type="ChEBI" id="CHEBI:29780"/>
        <dbReference type="ChEBI" id="CHEBI:58818"/>
        <dbReference type="EC" id="2.2.1.9"/>
    </reaction>
</comment>
<comment type="cofactor">
    <cofactor evidence="1">
        <name>Mg(2+)</name>
        <dbReference type="ChEBI" id="CHEBI:18420"/>
    </cofactor>
    <cofactor evidence="1">
        <name>Mn(2+)</name>
        <dbReference type="ChEBI" id="CHEBI:29035"/>
    </cofactor>
</comment>
<comment type="cofactor">
    <cofactor evidence="1">
        <name>thiamine diphosphate</name>
        <dbReference type="ChEBI" id="CHEBI:58937"/>
    </cofactor>
    <text evidence="1">Binds 1 thiamine pyrophosphate per subunit.</text>
</comment>
<comment type="pathway">
    <text evidence="1">Quinol/quinone metabolism; 1,4-dihydroxy-2-naphthoate biosynthesis; 1,4-dihydroxy-2-naphthoate from chorismate: step 2/7.</text>
</comment>
<comment type="pathway">
    <text evidence="1">Quinol/quinone metabolism; menaquinone biosynthesis.</text>
</comment>
<comment type="subunit">
    <text evidence="1">Homodimer.</text>
</comment>
<comment type="similarity">
    <text evidence="1">Belongs to the TPP enzyme family. MenD subfamily.</text>
</comment>
<name>MEND_MYCBT</name>
<evidence type="ECO:0000255" key="1">
    <source>
        <dbReference type="HAMAP-Rule" id="MF_01659"/>
    </source>
</evidence>
<reference key="1">
    <citation type="journal article" date="2009" name="Vaccine">
        <title>Whole genome sequence analysis of Mycobacterium bovis bacillus Calmette-Guerin (BCG) Tokyo 172: a comparative study of BCG vaccine substrains.</title>
        <authorList>
            <person name="Seki M."/>
            <person name="Honda I."/>
            <person name="Fujita I."/>
            <person name="Yano I."/>
            <person name="Yamamoto S."/>
            <person name="Koyama A."/>
        </authorList>
    </citation>
    <scope>NUCLEOTIDE SEQUENCE [LARGE SCALE GENOMIC DNA]</scope>
    <source>
        <strain>BCG / Tokyo 172 / ATCC 35737 / TMC 1019</strain>
    </source>
</reference>
<feature type="chain" id="PRO_1000187081" description="2-succinyl-5-enolpyruvyl-6-hydroxy-3-cyclohexene-1-carboxylate synthase">
    <location>
        <begin position="1"/>
        <end position="554"/>
    </location>
</feature>
<dbReference type="EC" id="2.2.1.9" evidence="1"/>
<dbReference type="EMBL" id="AP010918">
    <property type="protein sequence ID" value="BAH24864.1"/>
    <property type="molecule type" value="Genomic_DNA"/>
</dbReference>
<dbReference type="RefSeq" id="WP_003402927.1">
    <property type="nucleotide sequence ID" value="NZ_CP014566.1"/>
</dbReference>
<dbReference type="SMR" id="C1AKN5"/>
<dbReference type="KEGG" id="mbt:JTY_0570"/>
<dbReference type="HOGENOM" id="CLU_006051_4_1_11"/>
<dbReference type="UniPathway" id="UPA00079"/>
<dbReference type="UniPathway" id="UPA01057">
    <property type="reaction ID" value="UER00164"/>
</dbReference>
<dbReference type="GO" id="GO:0070204">
    <property type="term" value="F:2-succinyl-5-enolpyruvyl-6-hydroxy-3-cyclohexene-1-carboxylic-acid synthase activity"/>
    <property type="evidence" value="ECO:0007669"/>
    <property type="project" value="UniProtKB-UniRule"/>
</dbReference>
<dbReference type="GO" id="GO:0000287">
    <property type="term" value="F:magnesium ion binding"/>
    <property type="evidence" value="ECO:0007669"/>
    <property type="project" value="UniProtKB-UniRule"/>
</dbReference>
<dbReference type="GO" id="GO:0030145">
    <property type="term" value="F:manganese ion binding"/>
    <property type="evidence" value="ECO:0007669"/>
    <property type="project" value="UniProtKB-UniRule"/>
</dbReference>
<dbReference type="GO" id="GO:0030976">
    <property type="term" value="F:thiamine pyrophosphate binding"/>
    <property type="evidence" value="ECO:0007669"/>
    <property type="project" value="UniProtKB-UniRule"/>
</dbReference>
<dbReference type="GO" id="GO:0009234">
    <property type="term" value="P:menaquinone biosynthetic process"/>
    <property type="evidence" value="ECO:0007669"/>
    <property type="project" value="UniProtKB-UniRule"/>
</dbReference>
<dbReference type="CDD" id="cd07037">
    <property type="entry name" value="TPP_PYR_MenD"/>
    <property type="match status" value="1"/>
</dbReference>
<dbReference type="CDD" id="cd02009">
    <property type="entry name" value="TPP_SHCHC_synthase"/>
    <property type="match status" value="1"/>
</dbReference>
<dbReference type="FunFam" id="3.40.50.970:FF:000066">
    <property type="entry name" value="2-succinyl-5-enolpyruvyl-6-hydroxy-3-cyclohexene-1-carboxylate synthase"/>
    <property type="match status" value="1"/>
</dbReference>
<dbReference type="FunFam" id="3.40.50.970:FF:000068">
    <property type="entry name" value="2-succinyl-5-enolpyruvyl-6-hydroxy-3-cyclohexene-1-carboxylate synthase"/>
    <property type="match status" value="1"/>
</dbReference>
<dbReference type="Gene3D" id="3.40.50.970">
    <property type="match status" value="2"/>
</dbReference>
<dbReference type="Gene3D" id="3.40.50.1220">
    <property type="entry name" value="TPP-binding domain"/>
    <property type="match status" value="1"/>
</dbReference>
<dbReference type="HAMAP" id="MF_01659">
    <property type="entry name" value="MenD"/>
    <property type="match status" value="1"/>
</dbReference>
<dbReference type="InterPro" id="IPR004433">
    <property type="entry name" value="MenaQ_synth_MenD"/>
</dbReference>
<dbReference type="InterPro" id="IPR029061">
    <property type="entry name" value="THDP-binding"/>
</dbReference>
<dbReference type="InterPro" id="IPR012001">
    <property type="entry name" value="Thiamin_PyroP_enz_TPP-bd_dom"/>
</dbReference>
<dbReference type="NCBIfam" id="TIGR00173">
    <property type="entry name" value="menD"/>
    <property type="match status" value="1"/>
</dbReference>
<dbReference type="PANTHER" id="PTHR42916">
    <property type="entry name" value="2-SUCCINYL-5-ENOLPYRUVYL-6-HYDROXY-3-CYCLOHEXENE-1-CARBOXYLATE SYNTHASE"/>
    <property type="match status" value="1"/>
</dbReference>
<dbReference type="PANTHER" id="PTHR42916:SF1">
    <property type="entry name" value="PROTEIN PHYLLO, CHLOROPLASTIC"/>
    <property type="match status" value="1"/>
</dbReference>
<dbReference type="Pfam" id="PF02776">
    <property type="entry name" value="TPP_enzyme_N"/>
    <property type="match status" value="1"/>
</dbReference>
<dbReference type="PIRSF" id="PIRSF004983">
    <property type="entry name" value="MenD"/>
    <property type="match status" value="1"/>
</dbReference>
<dbReference type="SUPFAM" id="SSF52518">
    <property type="entry name" value="Thiamin diphosphate-binding fold (THDP-binding)"/>
    <property type="match status" value="2"/>
</dbReference>
<accession>C1AKN5</accession>
<keyword id="KW-0460">Magnesium</keyword>
<keyword id="KW-0464">Manganese</keyword>
<keyword id="KW-0474">Menaquinone biosynthesis</keyword>
<keyword id="KW-0479">Metal-binding</keyword>
<keyword id="KW-0786">Thiamine pyrophosphate</keyword>
<keyword id="KW-0808">Transferase</keyword>
<proteinExistence type="inferred from homology"/>